<accession>Q49ZF7</accession>
<reference key="1">
    <citation type="journal article" date="2005" name="Proc. Natl. Acad. Sci. U.S.A.">
        <title>Whole genome sequence of Staphylococcus saprophyticus reveals the pathogenesis of uncomplicated urinary tract infection.</title>
        <authorList>
            <person name="Kuroda M."/>
            <person name="Yamashita A."/>
            <person name="Hirakawa H."/>
            <person name="Kumano M."/>
            <person name="Morikawa K."/>
            <person name="Higashide M."/>
            <person name="Maruyama A."/>
            <person name="Inose Y."/>
            <person name="Matoba K."/>
            <person name="Toh H."/>
            <person name="Kuhara S."/>
            <person name="Hattori M."/>
            <person name="Ohta T."/>
        </authorList>
    </citation>
    <scope>NUCLEOTIDE SEQUENCE [LARGE SCALE GENOMIC DNA]</scope>
    <source>
        <strain>ATCC 15305 / DSM 20229 / NCIMB 8711 / NCTC 7292 / S-41</strain>
    </source>
</reference>
<sequence length="105" mass="11544">MHIKKGDNVKVIAGKDKGKEGKVVSTEPKKDRVVVEGVNIIKKHQKPTQFNPEGGILETEAAIHVSNVQLLDPKTNEPTRVGHKFVDGKKVRIAKKSGEEIKSNN</sequence>
<organism>
    <name type="scientific">Staphylococcus saprophyticus subsp. saprophyticus (strain ATCC 15305 / DSM 20229 / NCIMB 8711 / NCTC 7292 / S-41)</name>
    <dbReference type="NCBI Taxonomy" id="342451"/>
    <lineage>
        <taxon>Bacteria</taxon>
        <taxon>Bacillati</taxon>
        <taxon>Bacillota</taxon>
        <taxon>Bacilli</taxon>
        <taxon>Bacillales</taxon>
        <taxon>Staphylococcaceae</taxon>
        <taxon>Staphylococcus</taxon>
    </lineage>
</organism>
<feature type="chain" id="PRO_0000130723" description="Large ribosomal subunit protein uL24">
    <location>
        <begin position="1"/>
        <end position="105"/>
    </location>
</feature>
<feature type="region of interest" description="Disordered" evidence="2">
    <location>
        <begin position="1"/>
        <end position="25"/>
    </location>
</feature>
<name>RL24_STAS1</name>
<proteinExistence type="inferred from homology"/>
<comment type="function">
    <text evidence="1">One of two assembly initiator proteins, it binds directly to the 5'-end of the 23S rRNA, where it nucleates assembly of the 50S subunit.</text>
</comment>
<comment type="function">
    <text evidence="1">One of the proteins that surrounds the polypeptide exit tunnel on the outside of the subunit.</text>
</comment>
<comment type="subunit">
    <text evidence="1">Part of the 50S ribosomal subunit.</text>
</comment>
<comment type="similarity">
    <text evidence="1">Belongs to the universal ribosomal protein uL24 family.</text>
</comment>
<dbReference type="EMBL" id="AP008934">
    <property type="protein sequence ID" value="BAE17819.1"/>
    <property type="molecule type" value="Genomic_DNA"/>
</dbReference>
<dbReference type="RefSeq" id="WP_002482623.1">
    <property type="nucleotide sequence ID" value="NZ_MTGA01000036.1"/>
</dbReference>
<dbReference type="SMR" id="Q49ZF7"/>
<dbReference type="GeneID" id="66866821"/>
<dbReference type="KEGG" id="ssp:SSP0674"/>
<dbReference type="PATRIC" id="fig|342451.11.peg.676"/>
<dbReference type="eggNOG" id="COG0198">
    <property type="taxonomic scope" value="Bacteria"/>
</dbReference>
<dbReference type="HOGENOM" id="CLU_093315_2_0_9"/>
<dbReference type="OrthoDB" id="9807419at2"/>
<dbReference type="Proteomes" id="UP000006371">
    <property type="component" value="Chromosome"/>
</dbReference>
<dbReference type="GO" id="GO:1990904">
    <property type="term" value="C:ribonucleoprotein complex"/>
    <property type="evidence" value="ECO:0007669"/>
    <property type="project" value="UniProtKB-KW"/>
</dbReference>
<dbReference type="GO" id="GO:0005840">
    <property type="term" value="C:ribosome"/>
    <property type="evidence" value="ECO:0007669"/>
    <property type="project" value="UniProtKB-KW"/>
</dbReference>
<dbReference type="GO" id="GO:0019843">
    <property type="term" value="F:rRNA binding"/>
    <property type="evidence" value="ECO:0007669"/>
    <property type="project" value="UniProtKB-UniRule"/>
</dbReference>
<dbReference type="GO" id="GO:0003735">
    <property type="term" value="F:structural constituent of ribosome"/>
    <property type="evidence" value="ECO:0007669"/>
    <property type="project" value="InterPro"/>
</dbReference>
<dbReference type="GO" id="GO:0006412">
    <property type="term" value="P:translation"/>
    <property type="evidence" value="ECO:0007669"/>
    <property type="project" value="UniProtKB-UniRule"/>
</dbReference>
<dbReference type="CDD" id="cd06089">
    <property type="entry name" value="KOW_RPL26"/>
    <property type="match status" value="1"/>
</dbReference>
<dbReference type="FunFam" id="2.30.30.30:FF:000004">
    <property type="entry name" value="50S ribosomal protein L24"/>
    <property type="match status" value="1"/>
</dbReference>
<dbReference type="Gene3D" id="2.30.30.30">
    <property type="match status" value="1"/>
</dbReference>
<dbReference type="HAMAP" id="MF_01326_B">
    <property type="entry name" value="Ribosomal_uL24_B"/>
    <property type="match status" value="1"/>
</dbReference>
<dbReference type="InterPro" id="IPR005824">
    <property type="entry name" value="KOW"/>
</dbReference>
<dbReference type="InterPro" id="IPR014722">
    <property type="entry name" value="Rib_uL2_dom2"/>
</dbReference>
<dbReference type="InterPro" id="IPR003256">
    <property type="entry name" value="Ribosomal_uL24"/>
</dbReference>
<dbReference type="InterPro" id="IPR005825">
    <property type="entry name" value="Ribosomal_uL24_CS"/>
</dbReference>
<dbReference type="InterPro" id="IPR041988">
    <property type="entry name" value="Ribosomal_uL24_KOW"/>
</dbReference>
<dbReference type="InterPro" id="IPR008991">
    <property type="entry name" value="Translation_prot_SH3-like_sf"/>
</dbReference>
<dbReference type="NCBIfam" id="TIGR01079">
    <property type="entry name" value="rplX_bact"/>
    <property type="match status" value="1"/>
</dbReference>
<dbReference type="PANTHER" id="PTHR12903">
    <property type="entry name" value="MITOCHONDRIAL RIBOSOMAL PROTEIN L24"/>
    <property type="match status" value="1"/>
</dbReference>
<dbReference type="Pfam" id="PF00467">
    <property type="entry name" value="KOW"/>
    <property type="match status" value="1"/>
</dbReference>
<dbReference type="Pfam" id="PF17136">
    <property type="entry name" value="ribosomal_L24"/>
    <property type="match status" value="1"/>
</dbReference>
<dbReference type="SMART" id="SM00739">
    <property type="entry name" value="KOW"/>
    <property type="match status" value="1"/>
</dbReference>
<dbReference type="SUPFAM" id="SSF50104">
    <property type="entry name" value="Translation proteins SH3-like domain"/>
    <property type="match status" value="1"/>
</dbReference>
<dbReference type="PROSITE" id="PS01108">
    <property type="entry name" value="RIBOSOMAL_L24"/>
    <property type="match status" value="1"/>
</dbReference>
<protein>
    <recommendedName>
        <fullName evidence="1">Large ribosomal subunit protein uL24</fullName>
    </recommendedName>
    <alternativeName>
        <fullName evidence="3">50S ribosomal protein L24</fullName>
    </alternativeName>
</protein>
<evidence type="ECO:0000255" key="1">
    <source>
        <dbReference type="HAMAP-Rule" id="MF_01326"/>
    </source>
</evidence>
<evidence type="ECO:0000256" key="2">
    <source>
        <dbReference type="SAM" id="MobiDB-lite"/>
    </source>
</evidence>
<evidence type="ECO:0000305" key="3"/>
<gene>
    <name evidence="1" type="primary">rplX</name>
    <name type="ordered locus">SSP0674</name>
</gene>
<keyword id="KW-1185">Reference proteome</keyword>
<keyword id="KW-0687">Ribonucleoprotein</keyword>
<keyword id="KW-0689">Ribosomal protein</keyword>
<keyword id="KW-0694">RNA-binding</keyword>
<keyword id="KW-0699">rRNA-binding</keyword>